<dbReference type="EMBL" id="U47058">
    <property type="protein sequence ID" value="AAB36860.1"/>
    <property type="molecule type" value="mRNA"/>
</dbReference>
<dbReference type="SMR" id="P53772"/>
<dbReference type="eggNOG" id="KOG0850">
    <property type="taxonomic scope" value="Eukaryota"/>
</dbReference>
<dbReference type="Proteomes" id="UP000001554">
    <property type="component" value="Unplaced"/>
</dbReference>
<dbReference type="GO" id="GO:0005634">
    <property type="term" value="C:nucleus"/>
    <property type="evidence" value="ECO:0007669"/>
    <property type="project" value="UniProtKB-SubCell"/>
</dbReference>
<dbReference type="GO" id="GO:0000981">
    <property type="term" value="F:DNA-binding transcription factor activity, RNA polymerase II-specific"/>
    <property type="evidence" value="ECO:0000318"/>
    <property type="project" value="GO_Central"/>
</dbReference>
<dbReference type="GO" id="GO:0000978">
    <property type="term" value="F:RNA polymerase II cis-regulatory region sequence-specific DNA binding"/>
    <property type="evidence" value="ECO:0000318"/>
    <property type="project" value="GO_Central"/>
</dbReference>
<dbReference type="GO" id="GO:0030154">
    <property type="term" value="P:cell differentiation"/>
    <property type="evidence" value="ECO:0000318"/>
    <property type="project" value="GO_Central"/>
</dbReference>
<dbReference type="GO" id="GO:0006357">
    <property type="term" value="P:regulation of transcription by RNA polymerase II"/>
    <property type="evidence" value="ECO:0000318"/>
    <property type="project" value="GO_Central"/>
</dbReference>
<dbReference type="CDD" id="cd00086">
    <property type="entry name" value="homeodomain"/>
    <property type="match status" value="1"/>
</dbReference>
<dbReference type="FunFam" id="1.10.10.60:FF:000233">
    <property type="entry name" value="Distal-less, isoform C"/>
    <property type="match status" value="1"/>
</dbReference>
<dbReference type="Gene3D" id="1.10.10.60">
    <property type="entry name" value="Homeodomain-like"/>
    <property type="match status" value="1"/>
</dbReference>
<dbReference type="InterPro" id="IPR050460">
    <property type="entry name" value="Distal-less_Homeobox_TF"/>
</dbReference>
<dbReference type="InterPro" id="IPR001356">
    <property type="entry name" value="HD"/>
</dbReference>
<dbReference type="InterPro" id="IPR020479">
    <property type="entry name" value="HD_metazoa"/>
</dbReference>
<dbReference type="InterPro" id="IPR017970">
    <property type="entry name" value="Homeobox_CS"/>
</dbReference>
<dbReference type="InterPro" id="IPR009057">
    <property type="entry name" value="Homeodomain-like_sf"/>
</dbReference>
<dbReference type="InterPro" id="IPR000047">
    <property type="entry name" value="HTH_motif"/>
</dbReference>
<dbReference type="PANTHER" id="PTHR24327">
    <property type="entry name" value="HOMEOBOX PROTEIN"/>
    <property type="match status" value="1"/>
</dbReference>
<dbReference type="PANTHER" id="PTHR24327:SF81">
    <property type="entry name" value="HOMEOTIC PROTEIN DISTAL-LESS-RELATED"/>
    <property type="match status" value="1"/>
</dbReference>
<dbReference type="Pfam" id="PF00046">
    <property type="entry name" value="Homeodomain"/>
    <property type="match status" value="1"/>
</dbReference>
<dbReference type="PRINTS" id="PR00024">
    <property type="entry name" value="HOMEOBOX"/>
</dbReference>
<dbReference type="PRINTS" id="PR00031">
    <property type="entry name" value="HTHREPRESSR"/>
</dbReference>
<dbReference type="SMART" id="SM00389">
    <property type="entry name" value="HOX"/>
    <property type="match status" value="1"/>
</dbReference>
<dbReference type="SUPFAM" id="SSF46689">
    <property type="entry name" value="Homeodomain-like"/>
    <property type="match status" value="1"/>
</dbReference>
<dbReference type="PROSITE" id="PS00027">
    <property type="entry name" value="HOMEOBOX_1"/>
    <property type="match status" value="1"/>
</dbReference>
<dbReference type="PROSITE" id="PS50071">
    <property type="entry name" value="HOMEOBOX_2"/>
    <property type="match status" value="1"/>
</dbReference>
<sequence length="321" mass="35437">MEIPPVQQTPVSMSMNHSSYPVRCLHPTSHTQHESAFSTAAPHSRPLGYPFSMNPMANHPGHPYGNPYSTAAVTPVSESRLGGFSDDDNERLYHFSRTDKSPDPTDQRINGKGKKMRKPRTIYTSFQLQQLNRRFQRTQYLALPERAELAAQLGLTQTQVKIWFQNRRSKYKKLMKQGGAPPPAVGTPNSSAPNPVQQQSGQPGHASPPGAPTDLSDQQMSHGGQPNLPPRAPSQGQPQNGDDDAAWAAATCHDQRRTNADLLPTRMGRQQYQSHGELHELSPLLPLSMALPGTAAAIPTTPNIERQQQYVLPPVNFLQRL</sequence>
<evidence type="ECO:0000255" key="1">
    <source>
        <dbReference type="PROSITE-ProRule" id="PRU00108"/>
    </source>
</evidence>
<evidence type="ECO:0000256" key="2">
    <source>
        <dbReference type="SAM" id="MobiDB-lite"/>
    </source>
</evidence>
<evidence type="ECO:0000305" key="3"/>
<reference key="1">
    <citation type="journal article" date="1996" name="Development">
        <title>Sequence and developmental expression of AmphiDll, an amphioxus Distal-less gene transcribed in the ectoderm, epidermis and nervous system: insights into evolution of craniate forebrain and neural crest.</title>
        <authorList>
            <person name="Holland N.D."/>
            <person name="Panganiban G.E."/>
            <person name="Henyey E.L."/>
            <person name="Holland L.Z."/>
        </authorList>
    </citation>
    <scope>NUCLEOTIDE SEQUENCE [MRNA]</scope>
</reference>
<name>DLLH_BRAFL</name>
<comment type="subcellular location">
    <subcellularLocation>
        <location evidence="1">Nucleus</location>
    </subcellularLocation>
</comment>
<comment type="similarity">
    <text evidence="3">Belongs to the distal-less homeobox family.</text>
</comment>
<accession>P53772</accession>
<feature type="chain" id="PRO_0000049045" description="Homeobox protein DLL homolog">
    <location>
        <begin position="1"/>
        <end position="321"/>
    </location>
</feature>
<feature type="DNA-binding region" description="Homeobox" evidence="1">
    <location>
        <begin position="116"/>
        <end position="175"/>
    </location>
</feature>
<feature type="region of interest" description="Disordered" evidence="2">
    <location>
        <begin position="79"/>
        <end position="118"/>
    </location>
</feature>
<feature type="region of interest" description="Disordered" evidence="2">
    <location>
        <begin position="173"/>
        <end position="244"/>
    </location>
</feature>
<feature type="compositionally biased region" description="Basic and acidic residues" evidence="2">
    <location>
        <begin position="90"/>
        <end position="106"/>
    </location>
</feature>
<feature type="compositionally biased region" description="Polar residues" evidence="2">
    <location>
        <begin position="187"/>
        <end position="202"/>
    </location>
</feature>
<feature type="compositionally biased region" description="Polar residues" evidence="2">
    <location>
        <begin position="215"/>
        <end position="224"/>
    </location>
</feature>
<protein>
    <recommendedName>
        <fullName>Homeobox protein DLL homolog</fullName>
    </recommendedName>
</protein>
<proteinExistence type="evidence at transcript level"/>
<keyword id="KW-0217">Developmental protein</keyword>
<keyword id="KW-0238">DNA-binding</keyword>
<keyword id="KW-0371">Homeobox</keyword>
<keyword id="KW-0539">Nucleus</keyword>
<keyword id="KW-1185">Reference proteome</keyword>
<organism>
    <name type="scientific">Branchiostoma floridae</name>
    <name type="common">Florida lancelet</name>
    <name type="synonym">Amphioxus</name>
    <dbReference type="NCBI Taxonomy" id="7739"/>
    <lineage>
        <taxon>Eukaryota</taxon>
        <taxon>Metazoa</taxon>
        <taxon>Chordata</taxon>
        <taxon>Cephalochordata</taxon>
        <taxon>Leptocardii</taxon>
        <taxon>Amphioxiformes</taxon>
        <taxon>Branchiostomatidae</taxon>
        <taxon>Branchiostoma</taxon>
    </lineage>
</organism>